<protein>
    <recommendedName>
        <fullName>Translation initiation factor 2 subunit alpha</fullName>
    </recommendedName>
    <alternativeName>
        <fullName>aIF2-alpha</fullName>
    </alternativeName>
    <alternativeName>
        <fullName>eIF-2-alpha</fullName>
    </alternativeName>
</protein>
<keyword id="KW-0396">Initiation factor</keyword>
<keyword id="KW-0648">Protein biosynthesis</keyword>
<keyword id="KW-1185">Reference proteome</keyword>
<keyword id="KW-0694">RNA-binding</keyword>
<accession>O27363</accession>
<reference key="1">
    <citation type="journal article" date="1997" name="J. Bacteriol.">
        <title>Complete genome sequence of Methanobacterium thermoautotrophicum deltaH: functional analysis and comparative genomics.</title>
        <authorList>
            <person name="Smith D.R."/>
            <person name="Doucette-Stamm L.A."/>
            <person name="Deloughery C."/>
            <person name="Lee H.-M."/>
            <person name="Dubois J."/>
            <person name="Aldredge T."/>
            <person name="Bashirzadeh R."/>
            <person name="Blakely D."/>
            <person name="Cook R."/>
            <person name="Gilbert K."/>
            <person name="Harrison D."/>
            <person name="Hoang L."/>
            <person name="Keagle P."/>
            <person name="Lumm W."/>
            <person name="Pothier B."/>
            <person name="Qiu D."/>
            <person name="Spadafora R."/>
            <person name="Vicare R."/>
            <person name="Wang Y."/>
            <person name="Wierzbowski J."/>
            <person name="Gibson R."/>
            <person name="Jiwani N."/>
            <person name="Caruso A."/>
            <person name="Bush D."/>
            <person name="Safer H."/>
            <person name="Patwell D."/>
            <person name="Prabhakar S."/>
            <person name="McDougall S."/>
            <person name="Shimer G."/>
            <person name="Goyal A."/>
            <person name="Pietrovski S."/>
            <person name="Church G.M."/>
            <person name="Daniels C.J."/>
            <person name="Mao J.-I."/>
            <person name="Rice P."/>
            <person name="Noelling J."/>
            <person name="Reeve J.N."/>
        </authorList>
    </citation>
    <scope>NUCLEOTIDE SEQUENCE [LARGE SCALE GENOMIC DNA]</scope>
    <source>
        <strain>ATCC 29096 / DSM 1053 / JCM 10044 / NBRC 100330 / Delta H</strain>
    </source>
</reference>
<organism>
    <name type="scientific">Methanothermobacter thermautotrophicus (strain ATCC 29096 / DSM 1053 / JCM 10044 / NBRC 100330 / Delta H)</name>
    <name type="common">Methanobacterium thermoautotrophicum</name>
    <dbReference type="NCBI Taxonomy" id="187420"/>
    <lineage>
        <taxon>Archaea</taxon>
        <taxon>Methanobacteriati</taxon>
        <taxon>Methanobacteriota</taxon>
        <taxon>Methanomada group</taxon>
        <taxon>Methanobacteria</taxon>
        <taxon>Methanobacteriales</taxon>
        <taxon>Methanobacteriaceae</taxon>
        <taxon>Methanothermobacter</taxon>
    </lineage>
</organism>
<name>IF2A_METTH</name>
<evidence type="ECO:0000250" key="1"/>
<evidence type="ECO:0000305" key="2"/>
<feature type="chain" id="PRO_0000137396" description="Translation initiation factor 2 subunit alpha">
    <location>
        <begin position="1"/>
        <end position="262"/>
    </location>
</feature>
<feature type="domain" description="S1 motif">
    <location>
        <begin position="15"/>
        <end position="86"/>
    </location>
</feature>
<gene>
    <name type="primary">eif2a</name>
    <name type="ordered locus">MTH_1308</name>
</gene>
<comment type="function">
    <text evidence="1">eIF-2 functions in the early steps of protein synthesis by forming a ternary complex with GTP and initiator tRNA.</text>
</comment>
<comment type="subunit">
    <text evidence="1">Heterotrimer composed of an alpha, a beta and a gamma chain.</text>
</comment>
<comment type="similarity">
    <text evidence="2">Belongs to the eIF-2-alpha family.</text>
</comment>
<dbReference type="EMBL" id="AE000666">
    <property type="protein sequence ID" value="AAB85786.1"/>
    <property type="molecule type" value="Genomic_DNA"/>
</dbReference>
<dbReference type="PIR" id="G69040">
    <property type="entry name" value="G69040"/>
</dbReference>
<dbReference type="SMR" id="O27363"/>
<dbReference type="FunCoup" id="O27363">
    <property type="interactions" value="191"/>
</dbReference>
<dbReference type="STRING" id="187420.MTH_1308"/>
<dbReference type="PaxDb" id="187420-MTH_1308"/>
<dbReference type="EnsemblBacteria" id="AAB85786">
    <property type="protein sequence ID" value="AAB85786"/>
    <property type="gene ID" value="MTH_1308"/>
</dbReference>
<dbReference type="KEGG" id="mth:MTH_1308"/>
<dbReference type="PATRIC" id="fig|187420.15.peg.1277"/>
<dbReference type="HOGENOM" id="CLU_033458_0_2_2"/>
<dbReference type="InParanoid" id="O27363"/>
<dbReference type="Proteomes" id="UP000005223">
    <property type="component" value="Chromosome"/>
</dbReference>
<dbReference type="GO" id="GO:0043022">
    <property type="term" value="F:ribosome binding"/>
    <property type="evidence" value="ECO:0007669"/>
    <property type="project" value="TreeGrafter"/>
</dbReference>
<dbReference type="GO" id="GO:0003723">
    <property type="term" value="F:RNA binding"/>
    <property type="evidence" value="ECO:0007669"/>
    <property type="project" value="UniProtKB-UniRule"/>
</dbReference>
<dbReference type="GO" id="GO:0003743">
    <property type="term" value="F:translation initiation factor activity"/>
    <property type="evidence" value="ECO:0007669"/>
    <property type="project" value="UniProtKB-UniRule"/>
</dbReference>
<dbReference type="CDD" id="cd04452">
    <property type="entry name" value="S1_IF2_alpha"/>
    <property type="match status" value="1"/>
</dbReference>
<dbReference type="FunFam" id="2.40.50.140:FF:000015">
    <property type="entry name" value="Eukaryotic translation initiation factor 2 subunit alpha"/>
    <property type="match status" value="1"/>
</dbReference>
<dbReference type="FunFam" id="3.30.70.1130:FF:000002">
    <property type="entry name" value="Translation initiation factor 2 subunit alpha"/>
    <property type="match status" value="1"/>
</dbReference>
<dbReference type="Gene3D" id="3.30.70.1130">
    <property type="entry name" value="EIF_2_alpha"/>
    <property type="match status" value="1"/>
</dbReference>
<dbReference type="Gene3D" id="2.40.50.140">
    <property type="entry name" value="Nucleic acid-binding proteins"/>
    <property type="match status" value="1"/>
</dbReference>
<dbReference type="Gene3D" id="1.10.150.190">
    <property type="entry name" value="Translation initiation factor 2, subunit 1, domain 2"/>
    <property type="match status" value="1"/>
</dbReference>
<dbReference type="HAMAP" id="MF_00231">
    <property type="entry name" value="eIF_2_alpha"/>
    <property type="match status" value="1"/>
</dbReference>
<dbReference type="InterPro" id="IPR012340">
    <property type="entry name" value="NA-bd_OB-fold"/>
</dbReference>
<dbReference type="InterPro" id="IPR003029">
    <property type="entry name" value="S1_domain"/>
</dbReference>
<dbReference type="InterPro" id="IPR044126">
    <property type="entry name" value="S1_IF2_alpha"/>
</dbReference>
<dbReference type="InterPro" id="IPR022964">
    <property type="entry name" value="TIF2_asu_arc"/>
</dbReference>
<dbReference type="InterPro" id="IPR024055">
    <property type="entry name" value="TIF2_asu_C"/>
</dbReference>
<dbReference type="InterPro" id="IPR024054">
    <property type="entry name" value="TIF2_asu_middle_sf"/>
</dbReference>
<dbReference type="InterPro" id="IPR011488">
    <property type="entry name" value="TIF_2_asu"/>
</dbReference>
<dbReference type="NCBIfam" id="NF003062">
    <property type="entry name" value="PRK03987.1-1"/>
    <property type="match status" value="1"/>
</dbReference>
<dbReference type="NCBIfam" id="NF003064">
    <property type="entry name" value="PRK03987.1-4"/>
    <property type="match status" value="1"/>
</dbReference>
<dbReference type="PANTHER" id="PTHR10602">
    <property type="entry name" value="EUKARYOTIC TRANSLATION INITIATION FACTOR 2 SUBUNIT 1"/>
    <property type="match status" value="1"/>
</dbReference>
<dbReference type="PANTHER" id="PTHR10602:SF0">
    <property type="entry name" value="EUKARYOTIC TRANSLATION INITIATION FACTOR 2 SUBUNIT 1"/>
    <property type="match status" value="1"/>
</dbReference>
<dbReference type="Pfam" id="PF07541">
    <property type="entry name" value="EIF_2_alpha"/>
    <property type="match status" value="1"/>
</dbReference>
<dbReference type="Pfam" id="PF00575">
    <property type="entry name" value="S1"/>
    <property type="match status" value="1"/>
</dbReference>
<dbReference type="SMART" id="SM00316">
    <property type="entry name" value="S1"/>
    <property type="match status" value="1"/>
</dbReference>
<dbReference type="SUPFAM" id="SSF110993">
    <property type="entry name" value="eIF-2-alpha, C-terminal domain"/>
    <property type="match status" value="1"/>
</dbReference>
<dbReference type="SUPFAM" id="SSF116742">
    <property type="entry name" value="eIF2alpha middle domain-like"/>
    <property type="match status" value="1"/>
</dbReference>
<dbReference type="SUPFAM" id="SSF50249">
    <property type="entry name" value="Nucleic acid-binding proteins"/>
    <property type="match status" value="1"/>
</dbReference>
<dbReference type="PROSITE" id="PS50126">
    <property type="entry name" value="S1"/>
    <property type="match status" value="1"/>
</dbReference>
<proteinExistence type="inferred from homology"/>
<sequence length="262" mass="29780">MFFMVRRKNEWPEEGELVVGTVHKVLNYGAFATLEEYPGKEAFIHISEVSSGWVKNIRDFVRENQKIVARVLRVNPRKGHVDVSMKRIREDQRTKKIQAWKIEQKAEKFLELAARDLGKDLDTAYEEVGYELMDIFGDLYGAFETAAEEGEKSLIEEGVPEDWAAVITEVAKRNITPPEVQITGYVDIKSYAPNGVEIIRKALKSAQDEGITVQAVGAPRYRLIVKSTDYLKAEKQLKEAAQKCIEIVEKEGGEGEFLRELT</sequence>